<feature type="initiator methionine" description="Removed; by host" evidence="1">
    <location>
        <position position="1"/>
    </location>
</feature>
<feature type="chain" id="PRO_0000099252" description="Virion membrane protein A16">
    <location>
        <begin position="2"/>
        <end position="378"/>
    </location>
</feature>
<feature type="topological domain" description="Virion surface" evidence="2">
    <location>
        <begin position="2"/>
        <end position="342"/>
    </location>
</feature>
<feature type="transmembrane region" description="Helical; Signal-anchor for type II membrane protein" evidence="2">
    <location>
        <begin position="343"/>
        <end position="363"/>
    </location>
</feature>
<feature type="topological domain" description="Intravirion" evidence="2">
    <location>
        <begin position="364"/>
        <end position="378"/>
    </location>
</feature>
<feature type="lipid moiety-binding region" description="N-myristoyl glycine; by host" evidence="1">
    <location>
        <position position="2"/>
    </location>
</feature>
<protein>
    <recommendedName>
        <fullName>Virion membrane protein A16</fullName>
    </recommendedName>
</protein>
<dbReference type="EMBL" id="AF095689">
    <property type="protein sequence ID" value="AAF34010.1"/>
    <property type="molecule type" value="Genomic_DNA"/>
</dbReference>
<dbReference type="SMR" id="Q77TI4"/>
<dbReference type="Proteomes" id="UP000163220">
    <property type="component" value="Genome"/>
</dbReference>
<dbReference type="GO" id="GO:0016020">
    <property type="term" value="C:membrane"/>
    <property type="evidence" value="ECO:0007669"/>
    <property type="project" value="UniProtKB-KW"/>
</dbReference>
<dbReference type="GO" id="GO:0019031">
    <property type="term" value="C:viral envelope"/>
    <property type="evidence" value="ECO:0007669"/>
    <property type="project" value="UniProtKB-KW"/>
</dbReference>
<dbReference type="GO" id="GO:0055036">
    <property type="term" value="C:virion membrane"/>
    <property type="evidence" value="ECO:0007669"/>
    <property type="project" value="UniProtKB-SubCell"/>
</dbReference>
<dbReference type="GO" id="GO:0039663">
    <property type="term" value="P:membrane fusion involved in viral entry into host cell"/>
    <property type="evidence" value="ECO:0007669"/>
    <property type="project" value="UniProtKB-KW"/>
</dbReference>
<dbReference type="GO" id="GO:0046718">
    <property type="term" value="P:symbiont entry into host cell"/>
    <property type="evidence" value="ECO:0007669"/>
    <property type="project" value="UniProtKB-KW"/>
</dbReference>
<dbReference type="InterPro" id="IPR004251">
    <property type="entry name" value="Pox_virus_G9/A16"/>
</dbReference>
<dbReference type="Pfam" id="PF03003">
    <property type="entry name" value="Pox_G9-A16"/>
    <property type="match status" value="1"/>
</dbReference>
<keyword id="KW-1015">Disulfide bond</keyword>
<keyword id="KW-1168">Fusion of virus membrane with host membrane</keyword>
<keyword id="KW-0426">Late protein</keyword>
<keyword id="KW-0449">Lipoprotein</keyword>
<keyword id="KW-0472">Membrane</keyword>
<keyword id="KW-0519">Myristate</keyword>
<keyword id="KW-0735">Signal-anchor</keyword>
<keyword id="KW-0812">Transmembrane</keyword>
<keyword id="KW-1133">Transmembrane helix</keyword>
<keyword id="KW-0261">Viral envelope protein</keyword>
<keyword id="KW-1162">Viral penetration into host cytoplasm</keyword>
<keyword id="KW-0946">Virion</keyword>
<keyword id="KW-1160">Virus entry into host cell</keyword>
<gene>
    <name type="ORF">TA17L</name>
</gene>
<organismHost>
    <name type="scientific">Homo sapiens</name>
    <name type="common">Human</name>
    <dbReference type="NCBI Taxonomy" id="9606"/>
</organismHost>
<organism>
    <name type="scientific">Vaccinia virus (strain Tian Tan)</name>
    <name type="common">VACV</name>
    <dbReference type="NCBI Taxonomy" id="10253"/>
    <lineage>
        <taxon>Viruses</taxon>
        <taxon>Varidnaviria</taxon>
        <taxon>Bamfordvirae</taxon>
        <taxon>Nucleocytoviricota</taxon>
        <taxon>Pokkesviricetes</taxon>
        <taxon>Chitovirales</taxon>
        <taxon>Poxviridae</taxon>
        <taxon>Chordopoxvirinae</taxon>
        <taxon>Orthopoxvirus</taxon>
        <taxon>Vaccinia virus</taxon>
    </lineage>
</organism>
<reference key="1">
    <citation type="submission" date="1998-09" db="EMBL/GenBank/DDBJ databases">
        <title>Complete genomic sequence of vaccinia virus (Tian Tan strain).</title>
        <authorList>
            <person name="Jin Q."/>
            <person name="Hou Y.D."/>
            <person name="Cheng N.H."/>
            <person name="Yao E.M."/>
            <person name="Cheng S.X."/>
            <person name="Yang X.K."/>
            <person name="Jing D.Y."/>
            <person name="Yu W.H."/>
            <person name="Yuan J.S."/>
            <person name="Ma X.J."/>
        </authorList>
    </citation>
    <scope>NUCLEOTIDE SEQUENCE [LARGE SCALE GENOMIC DNA]</scope>
</reference>
<name>A16_VACCT</name>
<accession>Q77TI4</accession>
<comment type="function">
    <text evidence="1">Envelope protein part of the entry-fusion complex responsible for the virus membrane fusion with host cell membrane during virus entry. Also plays a role in cell-cell fusion (syncytium formation) (By similarity).</text>
</comment>
<comment type="subunit">
    <text evidence="1">Part of a stable entry-fusion complex (EFC) which is at least composed of proteins A16, A21, A28, G3, G9, H2, J5, and L5. Formation of the viral membrane is necessary for the assembly of the complex. Interacts with G9 (By similarity).</text>
</comment>
<comment type="subcellular location">
    <subcellularLocation>
        <location evidence="3">Virion membrane</location>
        <topology evidence="3">Single-pass type II membrane protein</topology>
    </subcellularLocation>
    <text evidence="1">Component of the mature virion (MV) membrane. The mature virion is located in the cytoplasm of infected cells and is probably released by cell lysis.</text>
</comment>
<comment type="induction">
    <text>Expressed in the late phase of the viral replicative cycle.</text>
</comment>
<comment type="PTM">
    <text evidence="1">Most cysteines are linked by disulfide bonds. They are created by the viral disulfide bond formation pathway, a poxvirus-specific redox pathway that operates on the cytoplasmic side of the MV membranes (By similarity).</text>
</comment>
<comment type="similarity">
    <text evidence="3">Belongs to the poxviridae A16/G9/J5 family.</text>
</comment>
<evidence type="ECO:0000250" key="1"/>
<evidence type="ECO:0000255" key="2"/>
<evidence type="ECO:0000305" key="3"/>
<sequence>MGAAVTLNRIKIAPGIADIRDKYMELGFNYPEYNRAVKFAEESYTYYYETSPGEIKPKFCLIDGMSIDHCSSFIVPEFAKQYVLIHGEPCSSFKFRPGSLIYYQNEVTPEYIKDLKHATDYIASGQRCHFIKKDYLLGDSDSVAKCCSKTNTKHCPKIFNNNYKTEHCDDFMTGFCRNDPGNPNCLEWLRAKRKPAMSTYSDICSKHMDARYCSEFIRIIRPDYFTFGDTALYVFCNDHKGNRNCWCANYPKSNSGDKYLGPRVCWLHECTDESRDRKWLYYNQDVQRTRCKYVGCTINVNSLALKNSQAELTSNCTRTTSAVGDVHHPGEPVVKDKIKLPTWLGAAITLVVISVIFYFISIYSRPKIKTNDINVRRR</sequence>
<proteinExistence type="evidence at transcript level"/>